<accession>A0QV09</accession>
<accession>I7G850</accession>
<feature type="chain" id="PRO_0000380740" description="Aldo-keto reductase MSMEG_2407/MSMEI_2346">
    <location>
        <begin position="1"/>
        <end position="283"/>
    </location>
</feature>
<feature type="active site" description="Proton donor" evidence="1">
    <location>
        <position position="58"/>
    </location>
</feature>
<feature type="binding site" evidence="2 5">
    <location>
        <position position="196"/>
    </location>
    <ligand>
        <name>NADPH</name>
        <dbReference type="ChEBI" id="CHEBI:57783"/>
    </ligand>
</feature>
<feature type="binding site" evidence="2 5">
    <location>
        <position position="198"/>
    </location>
    <ligand>
        <name>NADPH</name>
        <dbReference type="ChEBI" id="CHEBI:57783"/>
    </ligand>
</feature>
<feature type="binding site" evidence="2 5">
    <location>
        <position position="200"/>
    </location>
    <ligand>
        <name>NADPH</name>
        <dbReference type="ChEBI" id="CHEBI:57783"/>
    </ligand>
</feature>
<feature type="binding site" evidence="2 5">
    <location>
        <position position="236"/>
    </location>
    <ligand>
        <name>NADPH</name>
        <dbReference type="ChEBI" id="CHEBI:57783"/>
    </ligand>
</feature>
<feature type="binding site" evidence="2 5">
    <location>
        <position position="238"/>
    </location>
    <ligand>
        <name>NADPH</name>
        <dbReference type="ChEBI" id="CHEBI:57783"/>
    </ligand>
</feature>
<feature type="binding site" evidence="2 5">
    <location>
        <position position="239"/>
    </location>
    <ligand>
        <name>NADPH</name>
        <dbReference type="ChEBI" id="CHEBI:57783"/>
    </ligand>
</feature>
<feature type="binding site" evidence="2 5">
    <location>
        <position position="240"/>
    </location>
    <ligand>
        <name>NADPH</name>
        <dbReference type="ChEBI" id="CHEBI:57783"/>
    </ligand>
</feature>
<feature type="binding site" evidence="2 5">
    <location>
        <position position="244"/>
    </location>
    <ligand>
        <name>NADPH</name>
        <dbReference type="ChEBI" id="CHEBI:57783"/>
    </ligand>
</feature>
<feature type="binding site" evidence="2 5">
    <location>
        <position position="247"/>
    </location>
    <ligand>
        <name>NADPH</name>
        <dbReference type="ChEBI" id="CHEBI:57783"/>
    </ligand>
</feature>
<feature type="binding site" evidence="2 5">
    <location>
        <position position="248"/>
    </location>
    <ligand>
        <name>NADPH</name>
        <dbReference type="ChEBI" id="CHEBI:57783"/>
    </ligand>
</feature>
<feature type="binding site" evidence="2 5">
    <location>
        <position position="274"/>
    </location>
    <ligand>
        <name>NADPH</name>
        <dbReference type="ChEBI" id="CHEBI:57783"/>
    </ligand>
</feature>
<feature type="strand" evidence="7">
    <location>
        <begin position="13"/>
        <end position="15"/>
    </location>
</feature>
<feature type="strand" evidence="7">
    <location>
        <begin position="21"/>
        <end position="28"/>
    </location>
</feature>
<feature type="helix" evidence="7">
    <location>
        <begin position="34"/>
        <end position="47"/>
    </location>
</feature>
<feature type="strand" evidence="7">
    <location>
        <begin position="51"/>
        <end position="53"/>
    </location>
</feature>
<feature type="helix" evidence="7">
    <location>
        <begin position="56"/>
        <end position="58"/>
    </location>
</feature>
<feature type="helix" evidence="7">
    <location>
        <begin position="61"/>
        <end position="70"/>
    </location>
</feature>
<feature type="helix" evidence="7">
    <location>
        <begin position="75"/>
        <end position="77"/>
    </location>
</feature>
<feature type="strand" evidence="7">
    <location>
        <begin position="79"/>
        <end position="84"/>
    </location>
</feature>
<feature type="helix" evidence="7">
    <location>
        <begin position="86"/>
        <end position="88"/>
    </location>
</feature>
<feature type="helix" evidence="7">
    <location>
        <begin position="91"/>
        <end position="105"/>
    </location>
</feature>
<feature type="strand" evidence="7">
    <location>
        <begin position="110"/>
        <end position="115"/>
    </location>
</feature>
<feature type="helix" evidence="7">
    <location>
        <begin position="122"/>
        <end position="137"/>
    </location>
</feature>
<feature type="strand" evidence="7">
    <location>
        <begin position="140"/>
        <end position="148"/>
    </location>
</feature>
<feature type="helix" evidence="7">
    <location>
        <begin position="151"/>
        <end position="161"/>
    </location>
</feature>
<feature type="strand" evidence="7">
    <location>
        <begin position="166"/>
        <end position="171"/>
    </location>
</feature>
<feature type="helix" evidence="7">
    <location>
        <begin position="179"/>
        <end position="187"/>
    </location>
</feature>
<feature type="strand" evidence="7">
    <location>
        <begin position="191"/>
        <end position="195"/>
    </location>
</feature>
<feature type="turn" evidence="7">
    <location>
        <begin position="197"/>
        <end position="201"/>
    </location>
</feature>
<feature type="helix" evidence="7">
    <location>
        <begin position="202"/>
        <end position="205"/>
    </location>
</feature>
<feature type="helix" evidence="7">
    <location>
        <begin position="207"/>
        <end position="216"/>
    </location>
</feature>
<feature type="helix" evidence="7">
    <location>
        <begin position="220"/>
        <end position="230"/>
    </location>
</feature>
<feature type="strand" evidence="7">
    <location>
        <begin position="234"/>
        <end position="237"/>
    </location>
</feature>
<feature type="helix" evidence="7">
    <location>
        <begin position="242"/>
        <end position="249"/>
    </location>
</feature>
<feature type="helix" evidence="7">
    <location>
        <begin position="258"/>
        <end position="265"/>
    </location>
</feature>
<feature type="turn" evidence="7">
    <location>
        <begin position="277"/>
        <end position="279"/>
    </location>
</feature>
<gene>
    <name type="ordered locus">MSMEG_2407</name>
    <name type="ordered locus">MSMEI_2346</name>
</gene>
<organism>
    <name type="scientific">Mycolicibacterium smegmatis (strain ATCC 700084 / mc(2)155)</name>
    <name type="common">Mycobacterium smegmatis</name>
    <dbReference type="NCBI Taxonomy" id="246196"/>
    <lineage>
        <taxon>Bacteria</taxon>
        <taxon>Bacillati</taxon>
        <taxon>Actinomycetota</taxon>
        <taxon>Actinomycetes</taxon>
        <taxon>Mycobacteriales</taxon>
        <taxon>Mycobacteriaceae</taxon>
        <taxon>Mycolicibacterium</taxon>
    </lineage>
</organism>
<proteinExistence type="evidence at protein level"/>
<evidence type="ECO:0000250" key="1">
    <source>
        <dbReference type="UniProtKB" id="P80874"/>
    </source>
</evidence>
<evidence type="ECO:0000269" key="2">
    <source>
    </source>
</evidence>
<evidence type="ECO:0000303" key="3">
    <source>
    </source>
</evidence>
<evidence type="ECO:0000305" key="4"/>
<evidence type="ECO:0007744" key="5">
    <source>
        <dbReference type="PDB" id="2WZM"/>
    </source>
</evidence>
<evidence type="ECO:0007744" key="6">
    <source>
        <dbReference type="PDB" id="2WZT"/>
    </source>
</evidence>
<evidence type="ECO:0007829" key="7">
    <source>
        <dbReference type="PDB" id="2WZM"/>
    </source>
</evidence>
<protein>
    <recommendedName>
        <fullName evidence="4">Aldo-keto reductase MSMEG_2407/MSMEI_2346</fullName>
        <shortName evidence="3">AKR</shortName>
        <ecNumber evidence="2">1.1.1.-</ecNumber>
    </recommendedName>
    <alternativeName>
        <fullName evidence="3">AKR5H1</fullName>
    </alternativeName>
</protein>
<keyword id="KW-0002">3D-structure</keyword>
<keyword id="KW-0521">NADP</keyword>
<keyword id="KW-0560">Oxidoreductase</keyword>
<keyword id="KW-1185">Reference proteome</keyword>
<dbReference type="EC" id="1.1.1.-" evidence="2"/>
<dbReference type="EMBL" id="CP000480">
    <property type="protein sequence ID" value="ABK75625.1"/>
    <property type="molecule type" value="Genomic_DNA"/>
</dbReference>
<dbReference type="EMBL" id="CP001663">
    <property type="protein sequence ID" value="AFP38814.1"/>
    <property type="molecule type" value="Genomic_DNA"/>
</dbReference>
<dbReference type="RefSeq" id="WP_003893772.1">
    <property type="nucleotide sequence ID" value="NZ_SIJM01000012.1"/>
</dbReference>
<dbReference type="RefSeq" id="YP_886747.1">
    <property type="nucleotide sequence ID" value="NC_008596.1"/>
</dbReference>
<dbReference type="PDB" id="2WZM">
    <property type="method" value="X-ray"/>
    <property type="resolution" value="1.64 A"/>
    <property type="chains" value="A/B=1-283"/>
</dbReference>
<dbReference type="PDB" id="2WZT">
    <property type="method" value="X-ray"/>
    <property type="resolution" value="1.90 A"/>
    <property type="chains" value="A/B=1-283"/>
</dbReference>
<dbReference type="PDBsum" id="2WZM"/>
<dbReference type="PDBsum" id="2WZT"/>
<dbReference type="SMR" id="A0QV09"/>
<dbReference type="STRING" id="246196.MSMEG_2407"/>
<dbReference type="PaxDb" id="246196-MSMEI_2346"/>
<dbReference type="KEGG" id="msb:LJ00_11970"/>
<dbReference type="KEGG" id="msg:MSMEI_2346"/>
<dbReference type="KEGG" id="msm:MSMEG_2407"/>
<dbReference type="PATRIC" id="fig|246196.19.peg.2372"/>
<dbReference type="eggNOG" id="COG0656">
    <property type="taxonomic scope" value="Bacteria"/>
</dbReference>
<dbReference type="OrthoDB" id="9804790at2"/>
<dbReference type="EvolutionaryTrace" id="A0QV09"/>
<dbReference type="PRO" id="PR:A0QV09"/>
<dbReference type="Proteomes" id="UP000000757">
    <property type="component" value="Chromosome"/>
</dbReference>
<dbReference type="Proteomes" id="UP000006158">
    <property type="component" value="Chromosome"/>
</dbReference>
<dbReference type="GO" id="GO:0004033">
    <property type="term" value="F:aldo-keto reductase (NADPH) activity"/>
    <property type="evidence" value="ECO:0007669"/>
    <property type="project" value="TreeGrafter"/>
</dbReference>
<dbReference type="CDD" id="cd19134">
    <property type="entry name" value="AKR_AKR5H1"/>
    <property type="match status" value="1"/>
</dbReference>
<dbReference type="FunFam" id="3.20.20.100:FF:000015">
    <property type="entry name" value="Oxidoreductase, aldo/keto reductase family"/>
    <property type="match status" value="1"/>
</dbReference>
<dbReference type="Gene3D" id="3.20.20.100">
    <property type="entry name" value="NADP-dependent oxidoreductase domain"/>
    <property type="match status" value="1"/>
</dbReference>
<dbReference type="InterPro" id="IPR020471">
    <property type="entry name" value="AKR"/>
</dbReference>
<dbReference type="InterPro" id="IPR018170">
    <property type="entry name" value="Aldo/ket_reductase_CS"/>
</dbReference>
<dbReference type="InterPro" id="IPR023210">
    <property type="entry name" value="NADP_OxRdtase_dom"/>
</dbReference>
<dbReference type="InterPro" id="IPR036812">
    <property type="entry name" value="NADP_OxRdtase_dom_sf"/>
</dbReference>
<dbReference type="PANTHER" id="PTHR43827">
    <property type="entry name" value="2,5-DIKETO-D-GLUCONIC ACID REDUCTASE"/>
    <property type="match status" value="1"/>
</dbReference>
<dbReference type="PANTHER" id="PTHR43827:SF3">
    <property type="entry name" value="NADP-DEPENDENT OXIDOREDUCTASE DOMAIN-CONTAINING PROTEIN"/>
    <property type="match status" value="1"/>
</dbReference>
<dbReference type="Pfam" id="PF00248">
    <property type="entry name" value="Aldo_ket_red"/>
    <property type="match status" value="1"/>
</dbReference>
<dbReference type="PIRSF" id="PIRSF000097">
    <property type="entry name" value="AKR"/>
    <property type="match status" value="1"/>
</dbReference>
<dbReference type="PRINTS" id="PR00069">
    <property type="entry name" value="ALDKETRDTASE"/>
</dbReference>
<dbReference type="SUPFAM" id="SSF51430">
    <property type="entry name" value="NAD(P)-linked oxidoreductase"/>
    <property type="match status" value="1"/>
</dbReference>
<dbReference type="PROSITE" id="PS00798">
    <property type="entry name" value="ALDOKETO_REDUCTASE_1"/>
    <property type="match status" value="1"/>
</dbReference>
<dbReference type="PROSITE" id="PS00062">
    <property type="entry name" value="ALDOKETO_REDUCTASE_2"/>
    <property type="match status" value="1"/>
</dbReference>
<sequence>MTASHGQAAAIPTVTLNDDNTLPVVGIGVGELSDSEAERSVSAALEAGYRLIDTAAAYGNEAAVGRAIAASGIPRDEIYVTTKLATPDQGFTSSQAAARASLERLGLDYVDLYLIHWPGGDTSKYVDSWGGLMKVKEDGIARSIGVCNFGAEDLETIVSLTYFTPAVNQIELHPLLNQAALREVNAGYNIVTEAYGPLGVGRLLDHPAVTAIAEAHGRTAAQVLLRWSIQLGNVVISRSANPERIASNLDVFGFELTADEMETLNGLDDGTRFRPDPATYTGS</sequence>
<name>Y2407_MYCS2</name>
<comment type="function">
    <text evidence="2">Catalyzes the NADPH-dependent reduction of dicarbonyls (PubMed:20188740). Exhibits narrow substrate specificity, with preferential activity against the dicarbonyl substrates phenylglyoxal and methylglyoxal (PubMed:20188740). Exhibits weak activity with ethyl-2-methyl acetoacetate (PubMed:20188740). Cannot use NADH (PubMed:20188740). May play an important role in the detoxification of methylglyoxal (PubMed:20188740).</text>
</comment>
<comment type="activity regulation">
    <text evidence="2">Inhibited by the antituberculosis drug isoniazid (INH).</text>
</comment>
<comment type="biophysicochemical properties">
    <kinetics>
        <KM evidence="2">0.55 mM for phenylglyoxal</KM>
        <KM evidence="2">0.88 mM for methylglyoxal</KM>
        <KM evidence="2">32 mM for ethyl-2-methyl acetoacetate</KM>
        <text evidence="2">kcat is 3.31 sec(-1) with phenylglyoxal as substrate. kcat is 3.08 sec(-1) with methylglyoxal as substrate. kcat is 116.11 sec(-1) with ethyl-2-methyl acetoacetate as substrate.</text>
    </kinetics>
</comment>
<comment type="subunit">
    <text evidence="2">Monomer.</text>
</comment>
<comment type="similarity">
    <text evidence="4">Belongs to the aldo/keto reductase family.</text>
</comment>
<reference key="1">
    <citation type="submission" date="2006-10" db="EMBL/GenBank/DDBJ databases">
        <authorList>
            <person name="Fleischmann R.D."/>
            <person name="Dodson R.J."/>
            <person name="Haft D.H."/>
            <person name="Merkel J.S."/>
            <person name="Nelson W.C."/>
            <person name="Fraser C.M."/>
        </authorList>
    </citation>
    <scope>NUCLEOTIDE SEQUENCE [LARGE SCALE GENOMIC DNA]</scope>
    <source>
        <strain>ATCC 700084 / mc(2)155</strain>
    </source>
</reference>
<reference key="2">
    <citation type="journal article" date="2007" name="Genome Biol.">
        <title>Interrupted coding sequences in Mycobacterium smegmatis: authentic mutations or sequencing errors?</title>
        <authorList>
            <person name="Deshayes C."/>
            <person name="Perrodou E."/>
            <person name="Gallien S."/>
            <person name="Euphrasie D."/>
            <person name="Schaeffer C."/>
            <person name="Van-Dorsselaer A."/>
            <person name="Poch O."/>
            <person name="Lecompte O."/>
            <person name="Reyrat J.-M."/>
        </authorList>
    </citation>
    <scope>NUCLEOTIDE SEQUENCE [LARGE SCALE GENOMIC DNA]</scope>
    <source>
        <strain>ATCC 700084 / mc(2)155</strain>
    </source>
</reference>
<reference key="3">
    <citation type="journal article" date="2009" name="Genome Res.">
        <title>Ortho-proteogenomics: multiple proteomes investigation through orthology and a new MS-based protocol.</title>
        <authorList>
            <person name="Gallien S."/>
            <person name="Perrodou E."/>
            <person name="Carapito C."/>
            <person name="Deshayes C."/>
            <person name="Reyrat J.-M."/>
            <person name="Van Dorsselaer A."/>
            <person name="Poch O."/>
            <person name="Schaeffer C."/>
            <person name="Lecompte O."/>
        </authorList>
    </citation>
    <scope>NUCLEOTIDE SEQUENCE [LARGE SCALE GENOMIC DNA]</scope>
    <source>
        <strain>ATCC 700084 / mc(2)155</strain>
    </source>
</reference>
<reference evidence="5 6" key="4">
    <citation type="journal article" date="2010" name="J. Mol. Biol.">
        <title>Crystal structure and comparative functional analyses of a Mycobacterium aldo-keto reductase.</title>
        <authorList>
            <person name="Scoble J."/>
            <person name="McAlister A.D."/>
            <person name="Fulton Z."/>
            <person name="Troy S."/>
            <person name="Byres E."/>
            <person name="Vivian J.P."/>
            <person name="Brammananth R."/>
            <person name="Wilce M.C."/>
            <person name="Le Nours J."/>
            <person name="Zaker-Tabrizi L."/>
            <person name="Coppel R.L."/>
            <person name="Crellin P.K."/>
            <person name="Rossjohn J."/>
            <person name="Beddoe T."/>
        </authorList>
    </citation>
    <scope>X-RAY CRYSTALLOGRAPHY (1.64 ANGSTROMS) OF APOENZYME AND IN COMPLEX WITH NADPH</scope>
    <scope>FUNCTION</scope>
    <scope>BIOPHYSICOCHEMICAL PROPERTIES</scope>
    <scope>ACTIVITY REGULATION</scope>
    <scope>SUBUNIT</scope>
    <source>
        <strain>ATCC 700084 / mc(2)155</strain>
    </source>
</reference>